<evidence type="ECO:0000255" key="1"/>
<evidence type="ECO:0000255" key="2">
    <source>
        <dbReference type="PROSITE-ProRule" id="PRU00114"/>
    </source>
</evidence>
<evidence type="ECO:0000269" key="3">
    <source>
    </source>
</evidence>
<evidence type="ECO:0000303" key="4">
    <source>
    </source>
</evidence>
<evidence type="ECO:0000303" key="5">
    <source>
    </source>
</evidence>
<evidence type="ECO:0000303" key="6">
    <source>
    </source>
</evidence>
<evidence type="ECO:0000303" key="7">
    <source>
    </source>
</evidence>
<evidence type="ECO:0000303" key="8">
    <source>
    </source>
</evidence>
<evidence type="ECO:0000303" key="9">
    <source>
    </source>
</evidence>
<evidence type="ECO:0000303" key="10">
    <source ref="3"/>
</evidence>
<evidence type="ECO:0000305" key="11"/>
<gene>
    <name evidence="10" type="primary">TRBV5-3</name>
</gene>
<proteinExistence type="evidence at protein level"/>
<protein>
    <recommendedName>
        <fullName evidence="11">Probable non-functional T cell receptor beta variable 5-3</fullName>
    </recommendedName>
</protein>
<name>TVB53_HUMAN</name>
<comment type="function">
    <text evidence="3 4 6 7 8">Probable non-functional open reading frame (ORF) of V region of the variable domain of T cell receptor (TR) beta chain (PubMed:24600447). Non-functional ORF generally cannot participate in the synthesis of a productive T cell receptor (TR) chain due to altered V-(D)-J or switch recombination and/or splicing site (at mRNA level) and/or conserved amino acid change (protein level) (PubMed:9619395). Alpha-beta T cell receptors are antigen specific receptors which are essential to the immune response and are present on the cell surface of T lymphocytes. Recognize peptide-major histocompatibility (MH) (pMH) complexes that are displayed by antigen presenting cells (APC), a prerequisite for efficient T cell adaptive immunity against pathogens (PubMed:25493333). Binding of alpha-beta TR to pMH complex initiates TR-CD3 clustering on the cell surface and intracellular activation of LCK that phosphorylates the ITAM motifs of CD3G, CD3D, CD3E and CD247 enabling the recruitment of ZAP70. In turn ZAP70 phosphorylates LAT, which recruits numerous signaling molecules to form the LAT signalosome. The LAT signalosome propagates signal branching to three major signaling pathways, the calcium, the mitogen-activated protein kinase (MAPK) kinase and the nuclear factor NF-kappa-B (NF-kB) pathways, leading to the mobilization of transcription factors that are critical for gene expression and essential for T cell growth and differentiation (PubMed:23524462). The T cell repertoire is generated in the thymus, by V-(D)-J rearrangement. This repertoire is then shaped by intrathymic selection events to generate a peripheral T cell pool of self-MH restricted, non-autoaggressive T cells. Post-thymic interaction of alpha-beta TR with the pMH complexes shapes TR structural and functional avidity (PubMed:15040585).</text>
</comment>
<comment type="subunit">
    <text evidence="5">Alpha-beta TR is a heterodimer composed of an alpha and beta chain; disulfide-linked. The alpha-beta TR is associated with the transmembrane signaling CD3 coreceptor proteins to form the TR-CD3 (TcR or TCR). The assembly of alpha-beta TR heterodimers with CD3 occurs in the endoplasmic reticulum where a single alpha-beta TR heterodimer associates with one CD3D-CD3E heterodimer, one CD3G-CD3E heterodimer and one CD247 homodimer forming a stable octameric structure. CD3D-CD3E and CD3G-CD3E heterodimers preferentially associate with TR alpha and TR beta chains, respectively. The association of the CD247 homodimer is the last step of TcR assembly in the endoplasmic reticulum and is required for transport to the cell surface.</text>
</comment>
<comment type="subcellular location">
    <subcellularLocation>
        <location evidence="5">Cell membrane</location>
    </subcellularLocation>
</comment>
<comment type="polymorphism">
    <text evidence="11">There are several alleles. The sequence shown is that of IMGT allele TRBV5-3*02.</text>
</comment>
<comment type="caution">
    <text evidence="9 11">Most probably a non-functional protein that cannot participate to the synthesis of a productive T cell receptor (TR) chain due to an altered splicing site (PubMed:9619395).</text>
</comment>
<reference key="1">
    <citation type="journal article" date="2003" name="Nature">
        <title>The DNA sequence of human chromosome 7.</title>
        <authorList>
            <person name="Hillier L.W."/>
            <person name="Fulton R.S."/>
            <person name="Fulton L.A."/>
            <person name="Graves T.A."/>
            <person name="Pepin K.H."/>
            <person name="Wagner-McPherson C."/>
            <person name="Layman D."/>
            <person name="Maas J."/>
            <person name="Jaeger S."/>
            <person name="Walker R."/>
            <person name="Wylie K."/>
            <person name="Sekhon M."/>
            <person name="Becker M.C."/>
            <person name="O'Laughlin M.D."/>
            <person name="Schaller M.E."/>
            <person name="Fewell G.A."/>
            <person name="Delehaunty K.D."/>
            <person name="Miner T.L."/>
            <person name="Nash W.E."/>
            <person name="Cordes M."/>
            <person name="Du H."/>
            <person name="Sun H."/>
            <person name="Edwards J."/>
            <person name="Bradshaw-Cordum H."/>
            <person name="Ali J."/>
            <person name="Andrews S."/>
            <person name="Isak A."/>
            <person name="Vanbrunt A."/>
            <person name="Nguyen C."/>
            <person name="Du F."/>
            <person name="Lamar B."/>
            <person name="Courtney L."/>
            <person name="Kalicki J."/>
            <person name="Ozersky P."/>
            <person name="Bielicki L."/>
            <person name="Scott K."/>
            <person name="Holmes A."/>
            <person name="Harkins R."/>
            <person name="Harris A."/>
            <person name="Strong C.M."/>
            <person name="Hou S."/>
            <person name="Tomlinson C."/>
            <person name="Dauphin-Kohlberg S."/>
            <person name="Kozlowicz-Reilly A."/>
            <person name="Leonard S."/>
            <person name="Rohlfing T."/>
            <person name="Rock S.M."/>
            <person name="Tin-Wollam A.-M."/>
            <person name="Abbott A."/>
            <person name="Minx P."/>
            <person name="Maupin R."/>
            <person name="Strowmatt C."/>
            <person name="Latreille P."/>
            <person name="Miller N."/>
            <person name="Johnson D."/>
            <person name="Murray J."/>
            <person name="Woessner J.P."/>
            <person name="Wendl M.C."/>
            <person name="Yang S.-P."/>
            <person name="Schultz B.R."/>
            <person name="Wallis J.W."/>
            <person name="Spieth J."/>
            <person name="Bieri T.A."/>
            <person name="Nelson J.O."/>
            <person name="Berkowicz N."/>
            <person name="Wohldmann P.E."/>
            <person name="Cook L.L."/>
            <person name="Hickenbotham M.T."/>
            <person name="Eldred J."/>
            <person name="Williams D."/>
            <person name="Bedell J.A."/>
            <person name="Mardis E.R."/>
            <person name="Clifton S.W."/>
            <person name="Chissoe S.L."/>
            <person name="Marra M.A."/>
            <person name="Raymond C."/>
            <person name="Haugen E."/>
            <person name="Gillett W."/>
            <person name="Zhou Y."/>
            <person name="James R."/>
            <person name="Phelps K."/>
            <person name="Iadanoto S."/>
            <person name="Bubb K."/>
            <person name="Simms E."/>
            <person name="Levy R."/>
            <person name="Clendenning J."/>
            <person name="Kaul R."/>
            <person name="Kent W.J."/>
            <person name="Furey T.S."/>
            <person name="Baertsch R.A."/>
            <person name="Brent M.R."/>
            <person name="Keibler E."/>
            <person name="Flicek P."/>
            <person name="Bork P."/>
            <person name="Suyama M."/>
            <person name="Bailey J.A."/>
            <person name="Portnoy M.E."/>
            <person name="Torrents D."/>
            <person name="Chinwalla A.T."/>
            <person name="Gish W.R."/>
            <person name="Eddy S.R."/>
            <person name="McPherson J.D."/>
            <person name="Olson M.V."/>
            <person name="Eichler E.E."/>
            <person name="Green E.D."/>
            <person name="Waterston R.H."/>
            <person name="Wilson R.K."/>
        </authorList>
    </citation>
    <scope>NUCLEOTIDE SEQUENCE [LARGE SCALE GENOMIC DNA] (IMGT ALLELE TRBV5-3*02)</scope>
</reference>
<reference key="2">
    <citation type="journal article" date="1998" name="Exp. Clin. Immunogenet.">
        <title>IMGT (ImMunoGeneTics) locus on focus. A new section of Experimental and Clinical Immunogenetics.</title>
        <authorList>
            <person name="Lefranc M.P."/>
        </authorList>
    </citation>
    <scope>CHARACTERIZATION</scope>
</reference>
<reference key="3">
    <citation type="book" date="2001" name="The T Cell Receptor FactsBook.">
        <title>The T Cell Receptor FactsBook.</title>
        <editorList>
            <person name="Lefranc M.P."/>
            <person name="Lefranc G."/>
        </editorList>
        <authorList>
            <person name="Lefranc M.P."/>
            <person name="Lefranc G."/>
        </authorList>
    </citation>
    <scope>NOMENCLATURE</scope>
</reference>
<reference key="4">
    <citation type="journal article" date="2004" name="Nat. Rev. Immunol.">
        <title>The many important facets of T-cell repertoire diversity.</title>
        <authorList>
            <person name="Nikolich-Zugich J."/>
            <person name="Slifka M.K."/>
            <person name="Messaoudi I."/>
        </authorList>
    </citation>
    <scope>REVIEW ON T CELL REPERTOIRE DIVERSITY</scope>
</reference>
<reference key="5">
    <citation type="journal article" date="2010" name="Cold Spring Harb. Perspect. Biol.">
        <title>Structural biology of the T-cell receptor: insights into receptor assembly, ligand recognition, and initiation of signaling.</title>
        <authorList>
            <person name="Wucherpfennig K.W."/>
            <person name="Gagnon E."/>
            <person name="Call M.J."/>
            <person name="Huseby E.S."/>
            <person name="Call M.E."/>
        </authorList>
    </citation>
    <scope>REVIEW ON T CELL RECEPTOR-CD3 COMPLEX ASSEMBLY</scope>
    <scope>SUBCELLULAR LOCATION</scope>
</reference>
<reference key="6">
    <citation type="journal article" date="2013" name="Nat. Rev. Immunol.">
        <title>T cell receptor signalling networks: branched, diversified and bounded.</title>
        <authorList>
            <person name="Brownlie R.J."/>
            <person name="Zamoyska R."/>
        </authorList>
    </citation>
    <scope>REVIEW ON T CELL RECEPTOR SIGNALING</scope>
</reference>
<reference key="7">
    <citation type="journal article" date="2014" name="Front. Immunol.">
        <title>Immunoglobulin and T Cell Receptor Genes: IMGT((R)) and the Birth and Rise of Immunoinformatics.</title>
        <authorList>
            <person name="Lefranc M.P."/>
        </authorList>
    </citation>
    <scope>NOMENCLATURE</scope>
</reference>
<reference key="8">
    <citation type="journal article" date="2015" name="Annu. Rev. Immunol.">
        <title>T cell antigen receptor recognition of antigen-presenting molecules.</title>
        <authorList>
            <person name="Rossjohn J."/>
            <person name="Gras S."/>
            <person name="Miles J.J."/>
            <person name="Turner S.J."/>
            <person name="Godfrey D.I."/>
            <person name="McCluskey J."/>
        </authorList>
    </citation>
    <scope>REVIEW ON FUNCTION</scope>
</reference>
<dbReference type="EMBL" id="AC245088">
    <property type="status" value="NOT_ANNOTATED_CDS"/>
    <property type="molecule type" value="Genomic_DNA"/>
</dbReference>
<dbReference type="SMR" id="A0A0A0MS03"/>
<dbReference type="FunCoup" id="A0A0A0MS03">
    <property type="interactions" value="363"/>
</dbReference>
<dbReference type="GlyCosmos" id="A0A0A0MS03">
    <property type="glycosylation" value="1 site, No reported glycans"/>
</dbReference>
<dbReference type="GlyGen" id="A0A0A0MS03">
    <property type="glycosylation" value="1 site"/>
</dbReference>
<dbReference type="BioMuta" id="TRBV5-3"/>
<dbReference type="MassIVE" id="A0A0A0MS03"/>
<dbReference type="Ensembl" id="ENST00000390362.1">
    <property type="protein sequence ID" value="ENSP00000374885.1"/>
    <property type="gene ID" value="ENSG00000211715.1"/>
</dbReference>
<dbReference type="UCSC" id="uc033akp.2">
    <property type="organism name" value="human"/>
</dbReference>
<dbReference type="AGR" id="HGNC:12220"/>
<dbReference type="GeneCards" id="TRBV5-3"/>
<dbReference type="HGNC" id="HGNC:12220">
    <property type="gene designation" value="TRBV5-3"/>
</dbReference>
<dbReference type="HPA" id="ENSG00000211715">
    <property type="expression patterns" value="Not detected"/>
</dbReference>
<dbReference type="neXtProt" id="NX_A0A0A0MS03"/>
<dbReference type="VEuPathDB" id="HostDB:ENSG00000211715"/>
<dbReference type="GeneTree" id="ENSGT00940000154270"/>
<dbReference type="HOGENOM" id="CLU_077975_9_4_1"/>
<dbReference type="InParanoid" id="A0A0A0MS03"/>
<dbReference type="OMA" id="CWELLYL"/>
<dbReference type="OrthoDB" id="9803478at2759"/>
<dbReference type="PAN-GO" id="A0A0A0MS03">
    <property type="GO annotations" value="2 GO annotations based on evolutionary models"/>
</dbReference>
<dbReference type="PRO" id="PR:A0A0A0MS03"/>
<dbReference type="Proteomes" id="UP000005640">
    <property type="component" value="Chromosome 7"/>
</dbReference>
<dbReference type="RNAct" id="A0A0A0MS03">
    <property type="molecule type" value="protein"/>
</dbReference>
<dbReference type="Bgee" id="ENSG00000211715">
    <property type="expression patterns" value="Expressed in granulocyte and 38 other cell types or tissues"/>
</dbReference>
<dbReference type="GO" id="GO:0005886">
    <property type="term" value="C:plasma membrane"/>
    <property type="evidence" value="ECO:0000318"/>
    <property type="project" value="GO_Central"/>
</dbReference>
<dbReference type="GO" id="GO:0042101">
    <property type="term" value="C:T cell receptor complex"/>
    <property type="evidence" value="ECO:0007669"/>
    <property type="project" value="UniProtKB-KW"/>
</dbReference>
<dbReference type="GO" id="GO:0002250">
    <property type="term" value="P:adaptive immune response"/>
    <property type="evidence" value="ECO:0007669"/>
    <property type="project" value="UniProtKB-KW"/>
</dbReference>
<dbReference type="GO" id="GO:0007166">
    <property type="term" value="P:cell surface receptor signaling pathway"/>
    <property type="evidence" value="ECO:0000318"/>
    <property type="project" value="GO_Central"/>
</dbReference>
<dbReference type="Gene3D" id="2.60.40.10">
    <property type="entry name" value="Immunoglobulins"/>
    <property type="match status" value="1"/>
</dbReference>
<dbReference type="InterPro" id="IPR007110">
    <property type="entry name" value="Ig-like_dom"/>
</dbReference>
<dbReference type="InterPro" id="IPR036179">
    <property type="entry name" value="Ig-like_dom_sf"/>
</dbReference>
<dbReference type="InterPro" id="IPR013783">
    <property type="entry name" value="Ig-like_fold"/>
</dbReference>
<dbReference type="InterPro" id="IPR013106">
    <property type="entry name" value="Ig_V-set"/>
</dbReference>
<dbReference type="InterPro" id="IPR050413">
    <property type="entry name" value="TCR_beta_variable"/>
</dbReference>
<dbReference type="PANTHER" id="PTHR23268:SF6">
    <property type="entry name" value="T CELL RECEPTOR BETA VARIABLE 5-5-RELATED"/>
    <property type="match status" value="1"/>
</dbReference>
<dbReference type="PANTHER" id="PTHR23268">
    <property type="entry name" value="T-CELL RECEPTOR BETA CHAIN"/>
    <property type="match status" value="1"/>
</dbReference>
<dbReference type="Pfam" id="PF07686">
    <property type="entry name" value="V-set"/>
    <property type="match status" value="1"/>
</dbReference>
<dbReference type="SMART" id="SM00406">
    <property type="entry name" value="IGv"/>
    <property type="match status" value="1"/>
</dbReference>
<dbReference type="SUPFAM" id="SSF48726">
    <property type="entry name" value="Immunoglobulin"/>
    <property type="match status" value="1"/>
</dbReference>
<dbReference type="PROSITE" id="PS50835">
    <property type="entry name" value="IG_LIKE"/>
    <property type="match status" value="1"/>
</dbReference>
<feature type="signal peptide" evidence="1">
    <location>
        <begin position="1"/>
        <end position="21"/>
    </location>
</feature>
<feature type="chain" id="PRO_5001967239" description="Probable non-functional T cell receptor beta variable 5-3" evidence="1">
    <location>
        <begin position="22"/>
        <end position="114"/>
    </location>
</feature>
<feature type="domain" description="Ig-like" evidence="2">
    <location>
        <begin position="22"/>
        <end position="114" status="greater than"/>
    </location>
</feature>
<feature type="glycosylation site" description="N-linked (GlcNAc...) asparagine" evidence="1">
    <location>
        <position position="96"/>
    </location>
</feature>
<feature type="disulfide bond" evidence="2">
    <location>
        <begin position="42"/>
        <end position="110"/>
    </location>
</feature>
<feature type="non-terminal residue">
    <location>
        <position position="114"/>
    </location>
</feature>
<accession>A0A0A0MS03</accession>
<keyword id="KW-1064">Adaptive immunity</keyword>
<keyword id="KW-1003">Cell membrane</keyword>
<keyword id="KW-1015">Disulfide bond</keyword>
<keyword id="KW-0325">Glycoprotein</keyword>
<keyword id="KW-0391">Immunity</keyword>
<keyword id="KW-0393">Immunoglobulin domain</keyword>
<keyword id="KW-0472">Membrane</keyword>
<keyword id="KW-0675">Receptor</keyword>
<keyword id="KW-1185">Reference proteome</keyword>
<keyword id="KW-0732">Signal</keyword>
<keyword id="KW-1279">T cell receptor</keyword>
<sequence>MGPGLLCWELLYLLGAGPVEAGVTQSPTHLIKTRGQQVTLRCSPISGHSSVSWYQQAPGQGPQFIFEYANELRRSEGNFPNRFSGRQFHDYCSEMNVSALELGDSALYLCARSL</sequence>
<organism>
    <name type="scientific">Homo sapiens</name>
    <name type="common">Human</name>
    <dbReference type="NCBI Taxonomy" id="9606"/>
    <lineage>
        <taxon>Eukaryota</taxon>
        <taxon>Metazoa</taxon>
        <taxon>Chordata</taxon>
        <taxon>Craniata</taxon>
        <taxon>Vertebrata</taxon>
        <taxon>Euteleostomi</taxon>
        <taxon>Mammalia</taxon>
        <taxon>Eutheria</taxon>
        <taxon>Euarchontoglires</taxon>
        <taxon>Primates</taxon>
        <taxon>Haplorrhini</taxon>
        <taxon>Catarrhini</taxon>
        <taxon>Hominidae</taxon>
        <taxon>Homo</taxon>
    </lineage>
</organism>